<protein>
    <recommendedName>
        <fullName>Lysosomal acid lipase/cholesteryl ester hydrolase</fullName>
        <shortName>Acid cholesteryl ester hydrolase</shortName>
        <shortName>LAL</shortName>
        <ecNumber evidence="5 10 11">3.1.1.13</ecNumber>
    </recommendedName>
    <alternativeName>
        <fullName>Cholesteryl esterase</fullName>
    </alternativeName>
    <alternativeName>
        <fullName>Diacylglycerol lipase</fullName>
    </alternativeName>
    <alternativeName>
        <fullName>Lipase A</fullName>
    </alternativeName>
    <alternativeName>
        <fullName>Sterol esterase</fullName>
    </alternativeName>
    <alternativeName>
        <fullName>Triacylglycerol ester hydrolase</fullName>
    </alternativeName>
    <alternativeName>
        <fullName>Triacylglycerol lipase</fullName>
    </alternativeName>
</protein>
<feature type="signal peptide" evidence="11">
    <location>
        <begin position="1"/>
        <end position="27"/>
    </location>
</feature>
<feature type="propeptide" id="PRO_0000450225" description="Removed in mature form" evidence="5 11">
    <location>
        <begin position="28"/>
        <end position="76"/>
    </location>
</feature>
<feature type="chain" id="PRO_0000017799" description="Lysosomal acid lipase/cholesteryl ester hydrolase">
    <location>
        <begin position="77"/>
        <end position="399"/>
    </location>
</feature>
<feature type="domain" description="AB hydrolase-1" evidence="2">
    <location>
        <begin position="80"/>
        <end position="380"/>
    </location>
</feature>
<feature type="active site" description="Charge relay system" evidence="3">
    <location>
        <position position="174"/>
    </location>
</feature>
<feature type="active site" description="Charge relay system" evidence="3">
    <location>
        <position position="374"/>
    </location>
</feature>
<feature type="glycosylation site" description="N-linked (GlcNAc...) asparagine" evidence="2">
    <location>
        <position position="36"/>
    </location>
</feature>
<feature type="glycosylation site" description="N-linked (GlcNAc...) asparagine" evidence="2">
    <location>
        <position position="72"/>
    </location>
</feature>
<feature type="glycosylation site" description="N-linked (GlcNAc...) asparagine" evidence="2">
    <location>
        <position position="101"/>
    </location>
</feature>
<feature type="glycosylation site" description="N-linked (GlcNAc...) asparagine" evidence="8">
    <location>
        <position position="161"/>
    </location>
</feature>
<feature type="glycosylation site" description="N-linked (GlcNAc...) asparagine" evidence="2">
    <location>
        <position position="273"/>
    </location>
</feature>
<feature type="glycosylation site" description="N-linked (GlcNAc...) asparagine" evidence="8">
    <location>
        <position position="321"/>
    </location>
</feature>
<feature type="splice variant" id="VSP_018596" description="In isoform 2." evidence="17">
    <location>
        <begin position="1"/>
        <end position="56"/>
    </location>
</feature>
<feature type="splice variant" id="VSP_018597" description="In isoform 2." evidence="17">
    <original>DGYILCLNRIPHGRKNHSDK</original>
    <variation>MACLEFVPFDVQMCLEFLPS</variation>
    <location>
        <begin position="57"/>
        <end position="76"/>
    </location>
</feature>
<feature type="sequence variant" id="VAR_004247" description="In dbSNP:rs1051338." evidence="4 6 7">
    <original>T</original>
    <variation>P</variation>
    <location>
        <position position="16"/>
    </location>
</feature>
<feature type="sequence variant" id="VAR_026523" description="In dbSNP:rs1051339." evidence="14">
    <original>G</original>
    <variation>R</variation>
    <location>
        <position position="23"/>
    </location>
</feature>
<feature type="sequence variant" id="VAR_026524" description="In dbSNP:rs17850891." evidence="6">
    <original>V</original>
    <variation>L</variation>
    <location>
        <position position="29"/>
    </location>
</feature>
<feature type="sequence variant" id="VAR_088546" description="In WOLD; likely pathogenic." evidence="15">
    <location>
        <begin position="43"/>
        <end position="399"/>
    </location>
</feature>
<feature type="sequence variant" id="VAR_004248" description="In CESD; significant loss of enzyme activity; dbSNP:rs1423914418." evidence="16">
    <original>H</original>
    <variation>P</variation>
    <location>
        <position position="129"/>
    </location>
</feature>
<feature type="sequence variant" id="VAR_004249" description="In CESD; significant loss of enzyme activity; dbSNP:rs1423914418." evidence="16">
    <original>H</original>
    <variation>R</variation>
    <location>
        <position position="129"/>
    </location>
</feature>
<feature type="sequence variant" id="VAR_004250" description="In WOLD and CESD; likely pathogenic; dbSNP:rs121965086." evidence="12 13">
    <original>L</original>
    <variation>P</variation>
    <location>
        <position position="200"/>
    </location>
</feature>
<feature type="sequence variant" id="VAR_049821" description="In dbSNP:rs2228159.">
    <original>F</original>
    <variation>S</variation>
    <location>
        <position position="228"/>
    </location>
</feature>
<feature type="mutagenesis site" description="No effect on enzyme activity." evidence="5">
    <original>K</original>
    <variation>R</variation>
    <location>
        <position position="76"/>
    </location>
</feature>
<feature type="mutagenesis site" description="Significant loss of enzyme activity." evidence="5">
    <original>G</original>
    <variation>A</variation>
    <location>
        <position position="77"/>
    </location>
</feature>
<feature type="sequence conflict" description="In Ref. 5; BAD96480." evidence="17" ref="5">
    <original>K</original>
    <variation>R</variation>
    <location>
        <position position="397"/>
    </location>
</feature>
<feature type="turn" evidence="22">
    <location>
        <begin position="31"/>
        <end position="34"/>
    </location>
</feature>
<feature type="helix" evidence="22">
    <location>
        <begin position="37"/>
        <end position="43"/>
    </location>
</feature>
<feature type="strand" evidence="22">
    <location>
        <begin position="49"/>
        <end position="54"/>
    </location>
</feature>
<feature type="strand" evidence="22">
    <location>
        <begin position="58"/>
        <end position="66"/>
    </location>
</feature>
<feature type="strand" evidence="22">
    <location>
        <begin position="81"/>
        <end position="85"/>
    </location>
</feature>
<feature type="helix" evidence="22">
    <location>
        <begin position="92"/>
        <end position="95"/>
    </location>
</feature>
<feature type="turn" evidence="22">
    <location>
        <begin position="100"/>
        <end position="102"/>
    </location>
</feature>
<feature type="helix" evidence="22">
    <location>
        <begin position="104"/>
        <end position="110"/>
    </location>
</feature>
<feature type="strand" evidence="22">
    <location>
        <begin position="114"/>
        <end position="118"/>
    </location>
</feature>
<feature type="strand" evidence="22">
    <location>
        <begin position="123"/>
        <end position="126"/>
    </location>
</feature>
<feature type="strand" evidence="22">
    <location>
        <begin position="128"/>
        <end position="131"/>
    </location>
</feature>
<feature type="helix" evidence="22">
    <location>
        <begin position="137"/>
        <end position="140"/>
    </location>
</feature>
<feature type="helix" evidence="22">
    <location>
        <begin position="144"/>
        <end position="149"/>
    </location>
</feature>
<feature type="helix" evidence="22">
    <location>
        <begin position="151"/>
        <end position="163"/>
    </location>
</feature>
<feature type="strand" evidence="22">
    <location>
        <begin position="168"/>
        <end position="173"/>
    </location>
</feature>
<feature type="helix" evidence="22">
    <location>
        <begin position="175"/>
        <end position="186"/>
    </location>
</feature>
<feature type="helix" evidence="22">
    <location>
        <begin position="188"/>
        <end position="191"/>
    </location>
</feature>
<feature type="strand" evidence="22">
    <location>
        <begin position="194"/>
        <end position="201"/>
    </location>
</feature>
<feature type="helix" evidence="22">
    <location>
        <begin position="212"/>
        <end position="217"/>
    </location>
</feature>
<feature type="helix" evidence="22">
    <location>
        <begin position="221"/>
        <end position="228"/>
    </location>
</feature>
<feature type="strand" evidence="22">
    <location>
        <begin position="230"/>
        <end position="232"/>
    </location>
</feature>
<feature type="helix" evidence="22">
    <location>
        <begin position="237"/>
        <end position="244"/>
    </location>
</feature>
<feature type="turn" evidence="22">
    <location>
        <begin position="245"/>
        <end position="247"/>
    </location>
</feature>
<feature type="helix" evidence="22">
    <location>
        <begin position="255"/>
        <end position="258"/>
    </location>
</feature>
<feature type="helix" evidence="22">
    <location>
        <begin position="260"/>
        <end position="265"/>
    </location>
</feature>
<feature type="helix" evidence="22">
    <location>
        <begin position="269"/>
        <end position="271"/>
    </location>
</feature>
<feature type="helix" evidence="22">
    <location>
        <begin position="277"/>
        <end position="283"/>
    </location>
</feature>
<feature type="helix" evidence="22">
    <location>
        <begin position="290"/>
        <end position="302"/>
    </location>
</feature>
<feature type="helix" evidence="22">
    <location>
        <begin position="313"/>
        <end position="320"/>
    </location>
</feature>
<feature type="strand" evidence="22">
    <location>
        <begin position="321"/>
        <end position="324"/>
    </location>
</feature>
<feature type="helix" evidence="22">
    <location>
        <begin position="330"/>
        <end position="332"/>
    </location>
</feature>
<feature type="strand" evidence="22">
    <location>
        <begin position="337"/>
        <end position="342"/>
    </location>
</feature>
<feature type="strand" evidence="22">
    <location>
        <begin position="346"/>
        <end position="348"/>
    </location>
</feature>
<feature type="helix" evidence="22">
    <location>
        <begin position="350"/>
        <end position="357"/>
    </location>
</feature>
<feature type="strand" evidence="22">
    <location>
        <begin position="363"/>
        <end position="369"/>
    </location>
</feature>
<feature type="helix" evidence="22">
    <location>
        <begin position="376"/>
        <end position="379"/>
    </location>
</feature>
<feature type="helix" evidence="22">
    <location>
        <begin position="383"/>
        <end position="386"/>
    </location>
</feature>
<feature type="helix" evidence="22">
    <location>
        <begin position="388"/>
        <end position="399"/>
    </location>
</feature>
<dbReference type="EC" id="3.1.1.13" evidence="5 10 11"/>
<dbReference type="EMBL" id="M74775">
    <property type="protein sequence ID" value="AAA59519.1"/>
    <property type="molecule type" value="mRNA"/>
</dbReference>
<dbReference type="EMBL" id="U04285">
    <property type="protein sequence ID" value="AAB60327.1"/>
    <property type="molecule type" value="Genomic_DNA"/>
</dbReference>
<dbReference type="EMBL" id="U04286">
    <property type="protein sequence ID" value="AAB60327.1"/>
    <property type="status" value="JOINED"/>
    <property type="molecule type" value="Genomic_DNA"/>
</dbReference>
<dbReference type="EMBL" id="U04287">
    <property type="protein sequence ID" value="AAB60327.1"/>
    <property type="status" value="JOINED"/>
    <property type="molecule type" value="Genomic_DNA"/>
</dbReference>
<dbReference type="EMBL" id="U04288">
    <property type="protein sequence ID" value="AAB60327.1"/>
    <property type="status" value="JOINED"/>
    <property type="molecule type" value="Genomic_DNA"/>
</dbReference>
<dbReference type="EMBL" id="U04290">
    <property type="protein sequence ID" value="AAB60327.1"/>
    <property type="status" value="JOINED"/>
    <property type="molecule type" value="Genomic_DNA"/>
</dbReference>
<dbReference type="EMBL" id="U04291">
    <property type="protein sequence ID" value="AAB60327.1"/>
    <property type="status" value="JOINED"/>
    <property type="molecule type" value="Genomic_DNA"/>
</dbReference>
<dbReference type="EMBL" id="U04292">
    <property type="protein sequence ID" value="AAB60327.1"/>
    <property type="status" value="JOINED"/>
    <property type="molecule type" value="Genomic_DNA"/>
</dbReference>
<dbReference type="EMBL" id="U04293">
    <property type="protein sequence ID" value="AAB60327.1"/>
    <property type="status" value="JOINED"/>
    <property type="molecule type" value="Genomic_DNA"/>
</dbReference>
<dbReference type="EMBL" id="X76488">
    <property type="protein sequence ID" value="CAA54026.1"/>
    <property type="molecule type" value="mRNA"/>
</dbReference>
<dbReference type="EMBL" id="Z31690">
    <property type="protein sequence ID" value="CAA83495.1"/>
    <property type="molecule type" value="mRNA"/>
</dbReference>
<dbReference type="EMBL" id="U08464">
    <property type="protein sequence ID" value="AAB60328.1"/>
    <property type="molecule type" value="mRNA"/>
</dbReference>
<dbReference type="EMBL" id="AK314665">
    <property type="protein sequence ID" value="BAG37222.1"/>
    <property type="molecule type" value="mRNA"/>
</dbReference>
<dbReference type="EMBL" id="AK222760">
    <property type="protein sequence ID" value="BAD96480.1"/>
    <property type="molecule type" value="mRNA"/>
</dbReference>
<dbReference type="EMBL" id="AL353751">
    <property type="status" value="NOT_ANNOTATED_CDS"/>
    <property type="molecule type" value="Genomic_DNA"/>
</dbReference>
<dbReference type="EMBL" id="AL353146">
    <property type="status" value="NOT_ANNOTATED_CDS"/>
    <property type="molecule type" value="Genomic_DNA"/>
</dbReference>
<dbReference type="EMBL" id="AL513533">
    <property type="status" value="NOT_ANNOTATED_CDS"/>
    <property type="molecule type" value="Genomic_DNA"/>
</dbReference>
<dbReference type="EMBL" id="CH471066">
    <property type="protein sequence ID" value="EAW50140.1"/>
    <property type="molecule type" value="Genomic_DNA"/>
</dbReference>
<dbReference type="EMBL" id="CH471066">
    <property type="protein sequence ID" value="EAW50141.1"/>
    <property type="molecule type" value="Genomic_DNA"/>
</dbReference>
<dbReference type="EMBL" id="CH471066">
    <property type="protein sequence ID" value="EAW50142.1"/>
    <property type="molecule type" value="Genomic_DNA"/>
</dbReference>
<dbReference type="EMBL" id="BC012287">
    <property type="protein sequence ID" value="AAH12287.1"/>
    <property type="molecule type" value="mRNA"/>
</dbReference>
<dbReference type="CCDS" id="CCDS7401.1">
    <molecule id="P38571-1"/>
</dbReference>
<dbReference type="PIR" id="G01416">
    <property type="entry name" value="G01416"/>
</dbReference>
<dbReference type="PIR" id="S41408">
    <property type="entry name" value="S41408"/>
</dbReference>
<dbReference type="RefSeq" id="NP_000226.2">
    <molecule id="P38571-1"/>
    <property type="nucleotide sequence ID" value="NM_000235.4"/>
</dbReference>
<dbReference type="RefSeq" id="NP_001121077.1">
    <molecule id="P38571-1"/>
    <property type="nucleotide sequence ID" value="NM_001127605.3"/>
</dbReference>
<dbReference type="RefSeq" id="NP_001275908.1">
    <property type="nucleotide sequence ID" value="NM_001288979.1"/>
</dbReference>
<dbReference type="RefSeq" id="XP_024303791.1">
    <molecule id="P38571-1"/>
    <property type="nucleotide sequence ID" value="XM_024448023.2"/>
</dbReference>
<dbReference type="PDB" id="6V7N">
    <property type="method" value="X-ray"/>
    <property type="resolution" value="2.62 A"/>
    <property type="chains" value="A/B=22-399"/>
</dbReference>
<dbReference type="PDBsum" id="6V7N"/>
<dbReference type="SMR" id="P38571"/>
<dbReference type="BioGRID" id="110176">
    <property type="interactions" value="54"/>
</dbReference>
<dbReference type="FunCoup" id="P38571">
    <property type="interactions" value="1687"/>
</dbReference>
<dbReference type="IntAct" id="P38571">
    <property type="interactions" value="17"/>
</dbReference>
<dbReference type="STRING" id="9606.ENSP00000337354"/>
<dbReference type="BindingDB" id="P38571"/>
<dbReference type="ChEMBL" id="CHEMBL4184"/>
<dbReference type="SwissLipids" id="SLP:000001261"/>
<dbReference type="ESTHER" id="human-LIPA">
    <property type="family name" value="Acidic_Lipase"/>
</dbReference>
<dbReference type="MEROPS" id="S33.017"/>
<dbReference type="GlyConnect" id="1475">
    <property type="glycosylation" value="12 N-Linked glycans (3 sites)"/>
</dbReference>
<dbReference type="GlyCosmos" id="P38571">
    <property type="glycosylation" value="6 sites, 11 glycans"/>
</dbReference>
<dbReference type="GlyGen" id="P38571">
    <property type="glycosylation" value="9 sites, 45 N-linked glycans (4 sites), 1 O-linked glycan (1 site)"/>
</dbReference>
<dbReference type="iPTMnet" id="P38571"/>
<dbReference type="PhosphoSitePlus" id="P38571"/>
<dbReference type="SwissPalm" id="P38571"/>
<dbReference type="BioMuta" id="LIPA"/>
<dbReference type="DMDM" id="68067636"/>
<dbReference type="jPOST" id="P38571"/>
<dbReference type="MassIVE" id="P38571"/>
<dbReference type="PaxDb" id="9606-ENSP00000337354"/>
<dbReference type="PeptideAtlas" id="P38571"/>
<dbReference type="ProteomicsDB" id="55301">
    <molecule id="P38571-1"/>
</dbReference>
<dbReference type="ProteomicsDB" id="55302">
    <molecule id="P38571-2"/>
</dbReference>
<dbReference type="Pumba" id="P38571"/>
<dbReference type="Antibodypedia" id="30242">
    <property type="antibodies" value="268 antibodies from 29 providers"/>
</dbReference>
<dbReference type="DNASU" id="3988"/>
<dbReference type="Ensembl" id="ENST00000336233.10">
    <molecule id="P38571-1"/>
    <property type="protein sequence ID" value="ENSP00000337354.5"/>
    <property type="gene ID" value="ENSG00000107798.18"/>
</dbReference>
<dbReference type="Ensembl" id="ENST00000371837.5">
    <molecule id="P38571-2"/>
    <property type="protein sequence ID" value="ENSP00000360903.1"/>
    <property type="gene ID" value="ENSG00000107798.18"/>
</dbReference>
<dbReference type="GeneID" id="3988"/>
<dbReference type="KEGG" id="hsa:3988"/>
<dbReference type="MANE-Select" id="ENST00000336233.10">
    <property type="protein sequence ID" value="ENSP00000337354.5"/>
    <property type="RefSeq nucleotide sequence ID" value="NM_000235.4"/>
    <property type="RefSeq protein sequence ID" value="NP_000226.2"/>
</dbReference>
<dbReference type="UCSC" id="uc001kga.6">
    <molecule id="P38571-1"/>
    <property type="organism name" value="human"/>
</dbReference>
<dbReference type="AGR" id="HGNC:6617"/>
<dbReference type="CTD" id="3988"/>
<dbReference type="DisGeNET" id="3988"/>
<dbReference type="GeneCards" id="LIPA"/>
<dbReference type="GeneReviews" id="LIPA"/>
<dbReference type="HGNC" id="HGNC:6617">
    <property type="gene designation" value="LIPA"/>
</dbReference>
<dbReference type="HPA" id="ENSG00000107798">
    <property type="expression patterns" value="Tissue enhanced (lymphoid)"/>
</dbReference>
<dbReference type="MalaCards" id="LIPA"/>
<dbReference type="MIM" id="278000">
    <property type="type" value="phenotype"/>
</dbReference>
<dbReference type="MIM" id="613497">
    <property type="type" value="gene"/>
</dbReference>
<dbReference type="MIM" id="620151">
    <property type="type" value="phenotype"/>
</dbReference>
<dbReference type="neXtProt" id="NX_P38571"/>
<dbReference type="OpenTargets" id="ENSG00000107798"/>
<dbReference type="Orphanet" id="75234">
    <property type="disease" value="Cholesteryl ester storage disease"/>
</dbReference>
<dbReference type="Orphanet" id="75233">
    <property type="disease" value="Wolman disease"/>
</dbReference>
<dbReference type="PharmGKB" id="PA30391"/>
<dbReference type="VEuPathDB" id="HostDB:ENSG00000107798"/>
<dbReference type="eggNOG" id="KOG2624">
    <property type="taxonomic scope" value="Eukaryota"/>
</dbReference>
<dbReference type="GeneTree" id="ENSGT00940000154696"/>
<dbReference type="HOGENOM" id="CLU_010974_0_0_1"/>
<dbReference type="InParanoid" id="P38571"/>
<dbReference type="OMA" id="WRMYNEI"/>
<dbReference type="OrthoDB" id="9974421at2759"/>
<dbReference type="PAN-GO" id="P38571">
    <property type="GO annotations" value="3 GO annotations based on evolutionary models"/>
</dbReference>
<dbReference type="PhylomeDB" id="P38571"/>
<dbReference type="TreeFam" id="TF315485"/>
<dbReference type="PathwayCommons" id="P38571"/>
<dbReference type="Reactome" id="R-HSA-8964038">
    <property type="pathway name" value="LDL clearance"/>
</dbReference>
<dbReference type="SABIO-RK" id="P38571"/>
<dbReference type="BioGRID-ORCS" id="3988">
    <property type="hits" value="13 hits in 1157 CRISPR screens"/>
</dbReference>
<dbReference type="ChiTaRS" id="LIPA">
    <property type="organism name" value="human"/>
</dbReference>
<dbReference type="GenomeRNAi" id="3988"/>
<dbReference type="Pharos" id="P38571">
    <property type="development level" value="Tchem"/>
</dbReference>
<dbReference type="PRO" id="PR:P38571"/>
<dbReference type="Proteomes" id="UP000005640">
    <property type="component" value="Chromosome 10"/>
</dbReference>
<dbReference type="RNAct" id="P38571">
    <property type="molecule type" value="protein"/>
</dbReference>
<dbReference type="Bgee" id="ENSG00000107798">
    <property type="expression patterns" value="Expressed in jejunal mucosa and 207 other cell types or tissues"/>
</dbReference>
<dbReference type="ExpressionAtlas" id="P38571">
    <property type="expression patterns" value="baseline and differential"/>
</dbReference>
<dbReference type="GO" id="GO:0005829">
    <property type="term" value="C:cytosol"/>
    <property type="evidence" value="ECO:0000314"/>
    <property type="project" value="HPA"/>
</dbReference>
<dbReference type="GO" id="GO:0001650">
    <property type="term" value="C:fibrillar center"/>
    <property type="evidence" value="ECO:0000314"/>
    <property type="project" value="HPA"/>
</dbReference>
<dbReference type="GO" id="GO:0043231">
    <property type="term" value="C:intracellular membrane-bounded organelle"/>
    <property type="evidence" value="ECO:0000314"/>
    <property type="project" value="HPA"/>
</dbReference>
<dbReference type="GO" id="GO:0043202">
    <property type="term" value="C:lysosomal lumen"/>
    <property type="evidence" value="ECO:0000304"/>
    <property type="project" value="Reactome"/>
</dbReference>
<dbReference type="GO" id="GO:0005764">
    <property type="term" value="C:lysosome"/>
    <property type="evidence" value="ECO:0000250"/>
    <property type="project" value="UniProtKB"/>
</dbReference>
<dbReference type="GO" id="GO:0005654">
    <property type="term" value="C:nucleoplasm"/>
    <property type="evidence" value="ECO:0000314"/>
    <property type="project" value="HPA"/>
</dbReference>
<dbReference type="GO" id="GO:0016298">
    <property type="term" value="F:lipase activity"/>
    <property type="evidence" value="ECO:0000314"/>
    <property type="project" value="UniProtKB"/>
</dbReference>
<dbReference type="GO" id="GO:0004771">
    <property type="term" value="F:sterol ester esterase activity"/>
    <property type="evidence" value="ECO:0000314"/>
    <property type="project" value="UniProtKB"/>
</dbReference>
<dbReference type="GO" id="GO:0002526">
    <property type="term" value="P:acute inflammatory response"/>
    <property type="evidence" value="ECO:0007669"/>
    <property type="project" value="Ensembl"/>
</dbReference>
<dbReference type="GO" id="GO:1990845">
    <property type="term" value="P:adaptive thermogenesis"/>
    <property type="evidence" value="ECO:0007669"/>
    <property type="project" value="Ensembl"/>
</dbReference>
<dbReference type="GO" id="GO:0060612">
    <property type="term" value="P:adipose tissue development"/>
    <property type="evidence" value="ECO:0007669"/>
    <property type="project" value="Ensembl"/>
</dbReference>
<dbReference type="GO" id="GO:0006754">
    <property type="term" value="P:ATP biosynthetic process"/>
    <property type="evidence" value="ECO:0007669"/>
    <property type="project" value="Ensembl"/>
</dbReference>
<dbReference type="GO" id="GO:0060837">
    <property type="term" value="P:blood vessel endothelial cell differentiation"/>
    <property type="evidence" value="ECO:0007669"/>
    <property type="project" value="Ensembl"/>
</dbReference>
<dbReference type="GO" id="GO:0048539">
    <property type="term" value="P:bone marrow development"/>
    <property type="evidence" value="ECO:0007669"/>
    <property type="project" value="Ensembl"/>
</dbReference>
<dbReference type="GO" id="GO:0000902">
    <property type="term" value="P:cell morphogenesis"/>
    <property type="evidence" value="ECO:0007669"/>
    <property type="project" value="Ensembl"/>
</dbReference>
<dbReference type="GO" id="GO:0071838">
    <property type="term" value="P:cell proliferation in bone marrow"/>
    <property type="evidence" value="ECO:0007669"/>
    <property type="project" value="Ensembl"/>
</dbReference>
<dbReference type="GO" id="GO:0006695">
    <property type="term" value="P:cholesterol biosynthetic process"/>
    <property type="evidence" value="ECO:0007669"/>
    <property type="project" value="Ensembl"/>
</dbReference>
<dbReference type="GO" id="GO:0033344">
    <property type="term" value="P:cholesterol efflux"/>
    <property type="evidence" value="ECO:0007669"/>
    <property type="project" value="Ensembl"/>
</dbReference>
<dbReference type="GO" id="GO:0010878">
    <property type="term" value="P:cholesterol storage"/>
    <property type="evidence" value="ECO:0007669"/>
    <property type="project" value="Ensembl"/>
</dbReference>
<dbReference type="GO" id="GO:0035726">
    <property type="term" value="P:common myeloid progenitor cell proliferation"/>
    <property type="evidence" value="ECO:0007669"/>
    <property type="project" value="Ensembl"/>
</dbReference>
<dbReference type="GO" id="GO:0030421">
    <property type="term" value="P:defecation"/>
    <property type="evidence" value="ECO:0007669"/>
    <property type="project" value="Ensembl"/>
</dbReference>
<dbReference type="GO" id="GO:0008340">
    <property type="term" value="P:determination of adult lifespan"/>
    <property type="evidence" value="ECO:0007669"/>
    <property type="project" value="Ensembl"/>
</dbReference>
<dbReference type="GO" id="GO:0006897">
    <property type="term" value="P:endocytosis"/>
    <property type="evidence" value="ECO:0007669"/>
    <property type="project" value="Ensembl"/>
</dbReference>
<dbReference type="GO" id="GO:0008333">
    <property type="term" value="P:endosome to lysosome transport"/>
    <property type="evidence" value="ECO:0007669"/>
    <property type="project" value="Ensembl"/>
</dbReference>
<dbReference type="GO" id="GO:0001935">
    <property type="term" value="P:endothelial cell proliferation"/>
    <property type="evidence" value="ECO:0007669"/>
    <property type="project" value="Ensembl"/>
</dbReference>
<dbReference type="GO" id="GO:0070341">
    <property type="term" value="P:fat cell proliferation"/>
    <property type="evidence" value="ECO:0007669"/>
    <property type="project" value="Ensembl"/>
</dbReference>
<dbReference type="GO" id="GO:0006631">
    <property type="term" value="P:fatty acid metabolic process"/>
    <property type="evidence" value="ECO:0007669"/>
    <property type="project" value="Ensembl"/>
</dbReference>
<dbReference type="GO" id="GO:0010467">
    <property type="term" value="P:gene expression"/>
    <property type="evidence" value="ECO:0007669"/>
    <property type="project" value="Ensembl"/>
</dbReference>
<dbReference type="GO" id="GO:0006006">
    <property type="term" value="P:glucose metabolic process"/>
    <property type="evidence" value="ECO:0007669"/>
    <property type="project" value="Ensembl"/>
</dbReference>
<dbReference type="GO" id="GO:0006096">
    <property type="term" value="P:glycolytic process"/>
    <property type="evidence" value="ECO:0007669"/>
    <property type="project" value="Ensembl"/>
</dbReference>
<dbReference type="GO" id="GO:0002244">
    <property type="term" value="P:hematopoietic progenitor cell differentiation"/>
    <property type="evidence" value="ECO:0007669"/>
    <property type="project" value="Ensembl"/>
</dbReference>
<dbReference type="GO" id="GO:0048873">
    <property type="term" value="P:homeostasis of number of cells within a tissue"/>
    <property type="evidence" value="ECO:0007669"/>
    <property type="project" value="Ensembl"/>
</dbReference>
<dbReference type="GO" id="GO:0016042">
    <property type="term" value="P:lipid catabolic process"/>
    <property type="evidence" value="ECO:0007669"/>
    <property type="project" value="UniProtKB-KW"/>
</dbReference>
<dbReference type="GO" id="GO:0055088">
    <property type="term" value="P:lipid homeostasis"/>
    <property type="evidence" value="ECO:0007669"/>
    <property type="project" value="Ensembl"/>
</dbReference>
<dbReference type="GO" id="GO:0140354">
    <property type="term" value="P:lipid import into cell"/>
    <property type="evidence" value="ECO:0007669"/>
    <property type="project" value="Ensembl"/>
</dbReference>
<dbReference type="GO" id="GO:0042159">
    <property type="term" value="P:lipoprotein catabolic process"/>
    <property type="evidence" value="ECO:0007669"/>
    <property type="project" value="Ensembl"/>
</dbReference>
<dbReference type="GO" id="GO:0072576">
    <property type="term" value="P:liver morphogenesis"/>
    <property type="evidence" value="ECO:0007669"/>
    <property type="project" value="Ensembl"/>
</dbReference>
<dbReference type="GO" id="GO:0034383">
    <property type="term" value="P:low-density lipoprotein particle clearance"/>
    <property type="evidence" value="ECO:0000304"/>
    <property type="project" value="Reactome"/>
</dbReference>
<dbReference type="GO" id="GO:0030324">
    <property type="term" value="P:lung development"/>
    <property type="evidence" value="ECO:0007669"/>
    <property type="project" value="Ensembl"/>
</dbReference>
<dbReference type="GO" id="GO:0007040">
    <property type="term" value="P:lysosome organization"/>
    <property type="evidence" value="ECO:0007669"/>
    <property type="project" value="Ensembl"/>
</dbReference>
<dbReference type="GO" id="GO:0061519">
    <property type="term" value="P:macrophage homeostasis"/>
    <property type="evidence" value="ECO:0007669"/>
    <property type="project" value="Ensembl"/>
</dbReference>
<dbReference type="GO" id="GO:0007005">
    <property type="term" value="P:mitochondrion organization"/>
    <property type="evidence" value="ECO:0007669"/>
    <property type="project" value="Ensembl"/>
</dbReference>
<dbReference type="GO" id="GO:0000278">
    <property type="term" value="P:mitotic cell cycle"/>
    <property type="evidence" value="ECO:0007669"/>
    <property type="project" value="Ensembl"/>
</dbReference>
<dbReference type="GO" id="GO:0140962">
    <property type="term" value="P:multicellular organismal-level chemical homeostasis"/>
    <property type="evidence" value="ECO:0007669"/>
    <property type="project" value="Ensembl"/>
</dbReference>
<dbReference type="GO" id="GO:0033028">
    <property type="term" value="P:myeloid cell apoptotic process"/>
    <property type="evidence" value="ECO:0007669"/>
    <property type="project" value="Ensembl"/>
</dbReference>
<dbReference type="GO" id="GO:0030099">
    <property type="term" value="P:myeloid cell differentiation"/>
    <property type="evidence" value="ECO:0007669"/>
    <property type="project" value="Ensembl"/>
</dbReference>
<dbReference type="GO" id="GO:0050862">
    <property type="term" value="P:positive regulation of T cell receptor signaling pathway"/>
    <property type="evidence" value="ECO:0007669"/>
    <property type="project" value="Ensembl"/>
</dbReference>
<dbReference type="GO" id="GO:1903409">
    <property type="term" value="P:reactive oxygen species biosynthetic process"/>
    <property type="evidence" value="ECO:0007669"/>
    <property type="project" value="Ensembl"/>
</dbReference>
<dbReference type="GO" id="GO:0051881">
    <property type="term" value="P:regulation of mitochondrial membrane potential"/>
    <property type="evidence" value="ECO:0007669"/>
    <property type="project" value="Ensembl"/>
</dbReference>
<dbReference type="GO" id="GO:0002536">
    <property type="term" value="P:respiratory burst involved in inflammatory response"/>
    <property type="evidence" value="ECO:0007669"/>
    <property type="project" value="Ensembl"/>
</dbReference>
<dbReference type="GO" id="GO:0009409">
    <property type="term" value="P:response to cold"/>
    <property type="evidence" value="ECO:0007669"/>
    <property type="project" value="Ensembl"/>
</dbReference>
<dbReference type="GO" id="GO:0002021">
    <property type="term" value="P:response to dietary excess"/>
    <property type="evidence" value="ECO:0007669"/>
    <property type="project" value="Ensembl"/>
</dbReference>
<dbReference type="GO" id="GO:1901355">
    <property type="term" value="P:response to rapamycin"/>
    <property type="evidence" value="ECO:0007669"/>
    <property type="project" value="Ensembl"/>
</dbReference>
<dbReference type="GO" id="GO:0033189">
    <property type="term" value="P:response to vitamin A"/>
    <property type="evidence" value="ECO:0007669"/>
    <property type="project" value="Ensembl"/>
</dbReference>
<dbReference type="GO" id="GO:0009410">
    <property type="term" value="P:response to xenobiotic stimulus"/>
    <property type="evidence" value="ECO:0007669"/>
    <property type="project" value="Ensembl"/>
</dbReference>
<dbReference type="GO" id="GO:0007264">
    <property type="term" value="P:small GTPase-mediated signal transduction"/>
    <property type="evidence" value="ECO:0007669"/>
    <property type="project" value="Ensembl"/>
</dbReference>
<dbReference type="GO" id="GO:0048536">
    <property type="term" value="P:spleen development"/>
    <property type="evidence" value="ECO:0007669"/>
    <property type="project" value="Ensembl"/>
</dbReference>
<dbReference type="GO" id="GO:0016125">
    <property type="term" value="P:sterol metabolic process"/>
    <property type="evidence" value="ECO:0000318"/>
    <property type="project" value="GO_Central"/>
</dbReference>
<dbReference type="GO" id="GO:0070231">
    <property type="term" value="P:T cell apoptotic process"/>
    <property type="evidence" value="ECO:0007669"/>
    <property type="project" value="Ensembl"/>
</dbReference>
<dbReference type="GO" id="GO:0030217">
    <property type="term" value="P:T cell differentiation"/>
    <property type="evidence" value="ECO:0007669"/>
    <property type="project" value="Ensembl"/>
</dbReference>
<dbReference type="GO" id="GO:0042098">
    <property type="term" value="P:T cell proliferation"/>
    <property type="evidence" value="ECO:0007669"/>
    <property type="project" value="Ensembl"/>
</dbReference>
<dbReference type="GO" id="GO:0048771">
    <property type="term" value="P:tissue remodeling"/>
    <property type="evidence" value="ECO:0007669"/>
    <property type="project" value="Ensembl"/>
</dbReference>
<dbReference type="GO" id="GO:0031929">
    <property type="term" value="P:TOR signaling"/>
    <property type="evidence" value="ECO:0007669"/>
    <property type="project" value="Ensembl"/>
</dbReference>
<dbReference type="GO" id="GO:0006641">
    <property type="term" value="P:triglyceride metabolic process"/>
    <property type="evidence" value="ECO:0007669"/>
    <property type="project" value="Ensembl"/>
</dbReference>
<dbReference type="GO" id="GO:0071830">
    <property type="term" value="P:triglyceride-rich lipoprotein particle clearance"/>
    <property type="evidence" value="ECO:0007669"/>
    <property type="project" value="Ensembl"/>
</dbReference>
<dbReference type="GO" id="GO:0006776">
    <property type="term" value="P:vitamin A metabolic process"/>
    <property type="evidence" value="ECO:0007669"/>
    <property type="project" value="Ensembl"/>
</dbReference>
<dbReference type="FunFam" id="3.40.50.1820:FF:000012">
    <property type="entry name" value="Lipase"/>
    <property type="match status" value="1"/>
</dbReference>
<dbReference type="Gene3D" id="3.40.50.1820">
    <property type="entry name" value="alpha/beta hydrolase"/>
    <property type="match status" value="1"/>
</dbReference>
<dbReference type="InterPro" id="IPR000073">
    <property type="entry name" value="AB_hydrolase_1"/>
</dbReference>
<dbReference type="InterPro" id="IPR029058">
    <property type="entry name" value="AB_hydrolase_fold"/>
</dbReference>
<dbReference type="InterPro" id="IPR025483">
    <property type="entry name" value="Lipase_euk"/>
</dbReference>
<dbReference type="PANTHER" id="PTHR11005">
    <property type="entry name" value="LYSOSOMAL ACID LIPASE-RELATED"/>
    <property type="match status" value="1"/>
</dbReference>
<dbReference type="Pfam" id="PF00561">
    <property type="entry name" value="Abhydrolase_1"/>
    <property type="match status" value="1"/>
</dbReference>
<dbReference type="PIRSF" id="PIRSF000862">
    <property type="entry name" value="Steryl_ester_lip"/>
    <property type="match status" value="1"/>
</dbReference>
<dbReference type="SUPFAM" id="SSF53474">
    <property type="entry name" value="alpha/beta-Hydrolases"/>
    <property type="match status" value="1"/>
</dbReference>
<dbReference type="PROSITE" id="PS00120">
    <property type="entry name" value="LIPASE_SER"/>
    <property type="match status" value="1"/>
</dbReference>
<sequence length="399" mass="45419">MKMRFLGLVVCLVLWTLHSEGSGGKLTAVDPETNMNVSEIISYWGFPSEEYLVETEDGYILCLNRIPHGRKNHSDKGPKPVVFLQHGLLADSSNWVTNLANSSLGFILADAGFDVWMGNSRGNTWSRKHKTLSVSQDEFWAFSYDEMAKYDLPASINFILNKTGQEQVYYVGHSQGTTIGFIAFSQIPELAKRIKMFFALGPVASVAFCTSPMAKLGRLPDHLIKDLFGDKEFLPQSAFLKWLGTHVCTHVILKELCGNLCFLLCGFNERNLNMSRVDVYTTHSPAGTSVQNMLHWSQAVKFQKFQAFDWGSSAKNYFHYNQSYPPTYNVKDMLVPTAVWSGGHDWLADVYDVNILLTQITNLVFHESIPEWEHLDFIWGLDAPWRLYNKIINLMRKYQ</sequence>
<organism>
    <name type="scientific">Homo sapiens</name>
    <name type="common">Human</name>
    <dbReference type="NCBI Taxonomy" id="9606"/>
    <lineage>
        <taxon>Eukaryota</taxon>
        <taxon>Metazoa</taxon>
        <taxon>Chordata</taxon>
        <taxon>Craniata</taxon>
        <taxon>Vertebrata</taxon>
        <taxon>Euteleostomi</taxon>
        <taxon>Mammalia</taxon>
        <taxon>Eutheria</taxon>
        <taxon>Euarchontoglires</taxon>
        <taxon>Primates</taxon>
        <taxon>Haplorrhini</taxon>
        <taxon>Catarrhini</taxon>
        <taxon>Hominidae</taxon>
        <taxon>Homo</taxon>
    </lineage>
</organism>
<comment type="function">
    <text evidence="5 7 10 11 16 18 21">Catalyzes the deacylation of cholesteryl ester core lipids of endocytosed low density lipoproteins to generate free fatty acids and cholesterol (PubMed:15269241, PubMed:1718995, PubMed:7204383, PubMed:8112342, PubMed:9633819). Hydrolyzes triglycerides (1,2,3-triacylglycerol) and diglycerides (such as 1,2-diacylglycerol and 1,3-diacylglycerol) with preference for the acyl moieties at the sn-1 or sn-3 positions (PubMed:7204383, PubMed:8112342).</text>
</comment>
<comment type="catalytic activity">
    <reaction evidence="5 10 11">
        <text>a sterol ester + H2O = a sterol + a fatty acid + H(+)</text>
        <dbReference type="Rhea" id="RHEA:10100"/>
        <dbReference type="ChEBI" id="CHEBI:15377"/>
        <dbReference type="ChEBI" id="CHEBI:15378"/>
        <dbReference type="ChEBI" id="CHEBI:15889"/>
        <dbReference type="ChEBI" id="CHEBI:28868"/>
        <dbReference type="ChEBI" id="CHEBI:35915"/>
        <dbReference type="EC" id="3.1.1.13"/>
    </reaction>
</comment>
<comment type="catalytic activity">
    <reaction evidence="5 7 10 11 16">
        <text>cholesteryl (9Z-octadecenoate) + H2O = cholesterol + (9Z)-octadecenoate + H(+)</text>
        <dbReference type="Rhea" id="RHEA:33875"/>
        <dbReference type="ChEBI" id="CHEBI:15377"/>
        <dbReference type="ChEBI" id="CHEBI:15378"/>
        <dbReference type="ChEBI" id="CHEBI:16113"/>
        <dbReference type="ChEBI" id="CHEBI:30823"/>
        <dbReference type="ChEBI" id="CHEBI:46898"/>
    </reaction>
    <physiologicalReaction direction="left-to-right" evidence="18 19 20 21">
        <dbReference type="Rhea" id="RHEA:33876"/>
    </physiologicalReaction>
</comment>
<comment type="catalytic activity">
    <reaction evidence="10 18 21">
        <text>a triacylglycerol + H2O = a 1,2-diacylglycerol + a fatty acid + H(+)</text>
        <dbReference type="Rhea" id="RHEA:35667"/>
        <dbReference type="ChEBI" id="CHEBI:15377"/>
        <dbReference type="ChEBI" id="CHEBI:15378"/>
        <dbReference type="ChEBI" id="CHEBI:17855"/>
        <dbReference type="ChEBI" id="CHEBI:28868"/>
        <dbReference type="ChEBI" id="CHEBI:49172"/>
    </reaction>
    <physiologicalReaction direction="left-to-right" evidence="18 20 21">
        <dbReference type="Rhea" id="RHEA:35668"/>
    </physiologicalReaction>
</comment>
<comment type="catalytic activity">
    <reaction evidence="10 18 21">
        <text>1,2-di-(9Z-octadecenoyl)-glycerol + (9Z)-octadecenoate + H(+) = 1,2,3-tri-(9Z-octadecenoyl)-glycerol + H2O</text>
        <dbReference type="Rhea" id="RHEA:38379"/>
        <dbReference type="ChEBI" id="CHEBI:15377"/>
        <dbReference type="ChEBI" id="CHEBI:15378"/>
        <dbReference type="ChEBI" id="CHEBI:30823"/>
        <dbReference type="ChEBI" id="CHEBI:52323"/>
        <dbReference type="ChEBI" id="CHEBI:53753"/>
    </reaction>
    <physiologicalReaction direction="right-to-left" evidence="18 20 21">
        <dbReference type="Rhea" id="RHEA:38381"/>
    </physiologicalReaction>
</comment>
<comment type="catalytic activity">
    <reaction evidence="10">
        <text>a 1,2-diacylglycerol + H2O = a 1-acylglycerol + a fatty acid + H(+)</text>
        <dbReference type="Rhea" id="RHEA:44712"/>
        <dbReference type="ChEBI" id="CHEBI:15377"/>
        <dbReference type="ChEBI" id="CHEBI:15378"/>
        <dbReference type="ChEBI" id="CHEBI:28868"/>
        <dbReference type="ChEBI" id="CHEBI:35759"/>
        <dbReference type="ChEBI" id="CHEBI:49172"/>
    </reaction>
    <physiologicalReaction direction="left-to-right" evidence="20">
        <dbReference type="Rhea" id="RHEA:44713"/>
    </physiologicalReaction>
</comment>
<comment type="catalytic activity">
    <reaction evidence="10">
        <text>1,2-di-(9Z-octadecenoyl)-glycerol + H2O = 1-(9Z-octadecenoyl)-glycerol + (9Z)-octadecenoate + H(+)</text>
        <dbReference type="Rhea" id="RHEA:40967"/>
        <dbReference type="ChEBI" id="CHEBI:15377"/>
        <dbReference type="ChEBI" id="CHEBI:15378"/>
        <dbReference type="ChEBI" id="CHEBI:30823"/>
        <dbReference type="ChEBI" id="CHEBI:52323"/>
        <dbReference type="ChEBI" id="CHEBI:75342"/>
    </reaction>
    <physiologicalReaction direction="left-to-right" evidence="20">
        <dbReference type="Rhea" id="RHEA:40968"/>
    </physiologicalReaction>
</comment>
<comment type="catalytic activity">
    <reaction evidence="10">
        <text>a 1,3-diacylglycerol + H2O = a 1-acylglycerol + a fatty acid + H(+)</text>
        <dbReference type="Rhea" id="RHEA:78019"/>
        <dbReference type="ChEBI" id="CHEBI:15377"/>
        <dbReference type="ChEBI" id="CHEBI:15378"/>
        <dbReference type="ChEBI" id="CHEBI:28868"/>
        <dbReference type="ChEBI" id="CHEBI:35759"/>
        <dbReference type="ChEBI" id="CHEBI:47777"/>
    </reaction>
    <physiologicalReaction direction="left-to-right" evidence="20">
        <dbReference type="Rhea" id="RHEA:78020"/>
    </physiologicalReaction>
</comment>
<comment type="catalytic activity">
    <reaction evidence="10">
        <text>1,3-di-(9Z-octadecenoyl)-glycerol + H2O = 1-(9Z-octadecenoyl)-glycerol + (9Z)-octadecenoate + H(+)</text>
        <dbReference type="Rhea" id="RHEA:39939"/>
        <dbReference type="ChEBI" id="CHEBI:15377"/>
        <dbReference type="ChEBI" id="CHEBI:15378"/>
        <dbReference type="ChEBI" id="CHEBI:30823"/>
        <dbReference type="ChEBI" id="CHEBI:75342"/>
        <dbReference type="ChEBI" id="CHEBI:75735"/>
    </reaction>
    <physiologicalReaction direction="left-to-right" evidence="20">
        <dbReference type="Rhea" id="RHEA:39940"/>
    </physiologicalReaction>
</comment>
<comment type="biophysicochemical properties">
    <kinetics>
        <KM evidence="11">0.142 mM for cholesteryl oleate</KM>
        <KM evidence="10">0.8 mM for cholesteryl oleate</KM>
        <KM evidence="11">0.138 mM for trioleoylglycerol</KM>
        <KM evidence="10">0.8 mM for trioleoylglycerol</KM>
        <KM evidence="5">899 uM for trioleoylglycerol</KM>
        <KM evidence="10">0.9 mM for 1,2-dioleoylglycerol</KM>
        <KM evidence="10">1.2 mM for 1,3-dioleoylglycerol</KM>
        <Vmax evidence="11">4390.0 nmol/min/mg enzyme with cholesteryl oleate as substrate</Vmax>
        <Vmax evidence="10">1400.0 nmol/min/mg enzyme with cholesteryl oleate as substrate</Vmax>
        <Vmax evidence="11">4756.0 mmol/min/mg enzyme with trioleoylglycerol as substrate</Vmax>
        <Vmax evidence="10">5400.0 nmol/min/mg enzyme with trioleoylglycerol as substrate</Vmax>
        <Vmax evidence="10">19400.0 nmol/min/mg enzyme with 1,2-dioleoylglycerol as substrate</Vmax>
        <Vmax evidence="10">22100.0 nmol/min/mg enzyme with 1,3-dioleoylglycerol as substrate</Vmax>
    </kinetics>
    <phDependence>
        <text evidence="10 11">Optimum pH is 4.5-5 (PubMed:8112342). Optimum pH is 4.4 with either cholesterol oleate or trioleoylglycerol as substrate (PubMed:7204383).</text>
    </phDependence>
</comment>
<comment type="subunit">
    <text evidence="11">Monomer.</text>
</comment>
<comment type="subcellular location">
    <subcellularLocation>
        <location evidence="1">Lysosome</location>
    </subcellularLocation>
</comment>
<comment type="alternative products">
    <event type="alternative splicing"/>
    <isoform>
        <id>P38571-1</id>
        <name>1</name>
        <sequence type="displayed"/>
    </isoform>
    <isoform>
        <id>P38571-2</id>
        <name>2</name>
        <sequence type="described" ref="VSP_018596 VSP_018597"/>
    </isoform>
</comment>
<comment type="tissue specificity">
    <text evidence="11">Most abundantly expressed in brain, lung, kidney and mammary gland, a moderate expression seen in placenta and expressed at low levels in the liver and heart.</text>
</comment>
<comment type="PTM">
    <text evidence="11">Glycosylation is not essential for catalytic activity.</text>
</comment>
<comment type="disease" evidence="13 16">
    <disease id="DI-00301">
        <name>Cholesteryl ester storage disease</name>
        <acronym>CESD</acronym>
        <description>An autosomal recessive, mild form of lysosomal acid lipase deficiency characterized by accumulation of cholesteryl esters and triglycerides primarily in the liver. The clinical presentation is highly variable depending on residual levels of lysosomal acid lipase activity, and ranges from early onset of severe cirrhosis to later onset of more slowly progressive hepatic disease with survival into adulthood. Age at onset varies from childhood to adulthood.</description>
        <dbReference type="MIM" id="278000"/>
    </disease>
    <text>The disease is caused by variants affecting the gene represented in this entry.</text>
</comment>
<comment type="disease" evidence="9 12 15">
    <disease id="DI-01152">
        <name>Wolman disease</name>
        <acronym>WOLD</acronym>
        <description>An autosomal recessive, fulminant form of lysosomal acid lipase deficiency manifesting in early infancy. It is characterized by massive infiltration of the liver, spleen, and other organs by macrophages filled with cholesteryl esters and triglycerides. In addition, accumulation of cholesteryl esters in the zona reticularis of the adrenal gland leads to adrenal calcification and cortical insufficiency. Death occurs early in life from inanition.</description>
        <dbReference type="MIM" id="620151"/>
    </disease>
    <text>The disease is caused by variants affecting the gene represented in this entry.</text>
</comment>
<comment type="similarity">
    <text evidence="17">Belongs to the AB hydrolase superfamily. Lipase family.</text>
</comment>
<reference key="1">
    <citation type="journal article" date="1991" name="J. Biol. Chem.">
        <title>Cloning and expression of cDNA encoding human lysosomal acid lipase/cholesteryl ester hydrolase. Similarities to gastric and lingual lipases.</title>
        <authorList>
            <person name="Anderson R.A."/>
            <person name="Sando G.N."/>
        </authorList>
    </citation>
    <scope>NUCLEOTIDE SEQUENCE [MRNA] (ISOFORM 1)</scope>
    <scope>PROTEIN SEQUENCE OF 196-212; 277-297 AND 305-315</scope>
    <scope>FUNCTION</scope>
    <scope>CATALYTIC ACTIVITY</scope>
    <scope>VARIANT PRO-16</scope>
</reference>
<reference key="2">
    <citation type="journal article" date="1994" name="Eur. J. Biochem.">
        <title>Purification, characterization and molecular cloning of human hepatic lysosomal acid lipase.</title>
        <authorList>
            <person name="Ameis D."/>
            <person name="Merkel M."/>
            <person name="Eckerskorn C."/>
            <person name="Greten H."/>
        </authorList>
    </citation>
    <scope>NUCLEOTIDE SEQUENCE [MRNA] (ISOFORM 1)</scope>
    <scope>PROTEIN SEQUENCE OF 28-33 AND 77-93</scope>
    <scope>FUNCTION</scope>
    <scope>CATALYTIC ACTIVITY</scope>
    <scope>SUBUNIT</scope>
    <scope>BIOPHYSICOCHEMICAL PROPERTIES</scope>
    <scope>TISSUE SPECIFICITY</scope>
    <scope>GLYCOSYLATION</scope>
    <source>
        <tissue>Liver</tissue>
    </source>
</reference>
<reference key="3">
    <citation type="journal article" date="1996" name="J. Lipid Res.">
        <title>Tissue and cellular specific expression of murine lysosomal acid lipase mRNA and protein.</title>
        <authorList>
            <person name="Du H."/>
            <person name="Witte D.P."/>
            <person name="Grabowski G.A."/>
        </authorList>
    </citation>
    <scope>NUCLEOTIDE SEQUENCE [MRNA] (ISOFORM 1)</scope>
    <scope>VARIANT ARG-23</scope>
    <source>
        <tissue>Liver</tissue>
    </source>
</reference>
<reference key="4">
    <citation type="journal article" date="2004" name="Nat. Genet.">
        <title>Complete sequencing and characterization of 21,243 full-length human cDNAs.</title>
        <authorList>
            <person name="Ota T."/>
            <person name="Suzuki Y."/>
            <person name="Nishikawa T."/>
            <person name="Otsuki T."/>
            <person name="Sugiyama T."/>
            <person name="Irie R."/>
            <person name="Wakamatsu A."/>
            <person name="Hayashi K."/>
            <person name="Sato H."/>
            <person name="Nagai K."/>
            <person name="Kimura K."/>
            <person name="Makita H."/>
            <person name="Sekine M."/>
            <person name="Obayashi M."/>
            <person name="Nishi T."/>
            <person name="Shibahara T."/>
            <person name="Tanaka T."/>
            <person name="Ishii S."/>
            <person name="Yamamoto J."/>
            <person name="Saito K."/>
            <person name="Kawai Y."/>
            <person name="Isono Y."/>
            <person name="Nakamura Y."/>
            <person name="Nagahari K."/>
            <person name="Murakami K."/>
            <person name="Yasuda T."/>
            <person name="Iwayanagi T."/>
            <person name="Wagatsuma M."/>
            <person name="Shiratori A."/>
            <person name="Sudo H."/>
            <person name="Hosoiri T."/>
            <person name="Kaku Y."/>
            <person name="Kodaira H."/>
            <person name="Kondo H."/>
            <person name="Sugawara M."/>
            <person name="Takahashi M."/>
            <person name="Kanda K."/>
            <person name="Yokoi T."/>
            <person name="Furuya T."/>
            <person name="Kikkawa E."/>
            <person name="Omura Y."/>
            <person name="Abe K."/>
            <person name="Kamihara K."/>
            <person name="Katsuta N."/>
            <person name="Sato K."/>
            <person name="Tanikawa M."/>
            <person name="Yamazaki M."/>
            <person name="Ninomiya K."/>
            <person name="Ishibashi T."/>
            <person name="Yamashita H."/>
            <person name="Murakawa K."/>
            <person name="Fujimori K."/>
            <person name="Tanai H."/>
            <person name="Kimata M."/>
            <person name="Watanabe M."/>
            <person name="Hiraoka S."/>
            <person name="Chiba Y."/>
            <person name="Ishida S."/>
            <person name="Ono Y."/>
            <person name="Takiguchi S."/>
            <person name="Watanabe S."/>
            <person name="Yosida M."/>
            <person name="Hotuta T."/>
            <person name="Kusano J."/>
            <person name="Kanehori K."/>
            <person name="Takahashi-Fujii A."/>
            <person name="Hara H."/>
            <person name="Tanase T.-O."/>
            <person name="Nomura Y."/>
            <person name="Togiya S."/>
            <person name="Komai F."/>
            <person name="Hara R."/>
            <person name="Takeuchi K."/>
            <person name="Arita M."/>
            <person name="Imose N."/>
            <person name="Musashino K."/>
            <person name="Yuuki H."/>
            <person name="Oshima A."/>
            <person name="Sasaki N."/>
            <person name="Aotsuka S."/>
            <person name="Yoshikawa Y."/>
            <person name="Matsunawa H."/>
            <person name="Ichihara T."/>
            <person name="Shiohata N."/>
            <person name="Sano S."/>
            <person name="Moriya S."/>
            <person name="Momiyama H."/>
            <person name="Satoh N."/>
            <person name="Takami S."/>
            <person name="Terashima Y."/>
            <person name="Suzuki O."/>
            <person name="Nakagawa S."/>
            <person name="Senoh A."/>
            <person name="Mizoguchi H."/>
            <person name="Goto Y."/>
            <person name="Shimizu F."/>
            <person name="Wakebe H."/>
            <person name="Hishigaki H."/>
            <person name="Watanabe T."/>
            <person name="Sugiyama A."/>
            <person name="Takemoto M."/>
            <person name="Kawakami B."/>
            <person name="Yamazaki M."/>
            <person name="Watanabe K."/>
            <person name="Kumagai A."/>
            <person name="Itakura S."/>
            <person name="Fukuzumi Y."/>
            <person name="Fujimori Y."/>
            <person name="Komiyama M."/>
            <person name="Tashiro H."/>
            <person name="Tanigami A."/>
            <person name="Fujiwara T."/>
            <person name="Ono T."/>
            <person name="Yamada K."/>
            <person name="Fujii Y."/>
            <person name="Ozaki K."/>
            <person name="Hirao M."/>
            <person name="Ohmori Y."/>
            <person name="Kawabata A."/>
            <person name="Hikiji T."/>
            <person name="Kobatake N."/>
            <person name="Inagaki H."/>
            <person name="Ikema Y."/>
            <person name="Okamoto S."/>
            <person name="Okitani R."/>
            <person name="Kawakami T."/>
            <person name="Noguchi S."/>
            <person name="Itoh T."/>
            <person name="Shigeta K."/>
            <person name="Senba T."/>
            <person name="Matsumura K."/>
            <person name="Nakajima Y."/>
            <person name="Mizuno T."/>
            <person name="Morinaga M."/>
            <person name="Sasaki M."/>
            <person name="Togashi T."/>
            <person name="Oyama M."/>
            <person name="Hata H."/>
            <person name="Watanabe M."/>
            <person name="Komatsu T."/>
            <person name="Mizushima-Sugano J."/>
            <person name="Satoh T."/>
            <person name="Shirai Y."/>
            <person name="Takahashi Y."/>
            <person name="Nakagawa K."/>
            <person name="Okumura K."/>
            <person name="Nagase T."/>
            <person name="Nomura N."/>
            <person name="Kikuchi H."/>
            <person name="Masuho Y."/>
            <person name="Yamashita R."/>
            <person name="Nakai K."/>
            <person name="Yada T."/>
            <person name="Nakamura Y."/>
            <person name="Ohara O."/>
            <person name="Isogai T."/>
            <person name="Sugano S."/>
        </authorList>
    </citation>
    <scope>NUCLEOTIDE SEQUENCE [LARGE SCALE MRNA] (ISOFORM 1)</scope>
    <scope>VARIANT PRO-16</scope>
    <source>
        <tissue>Umbilical cord blood</tissue>
    </source>
</reference>
<reference key="5">
    <citation type="submission" date="2005-04" db="EMBL/GenBank/DDBJ databases">
        <authorList>
            <person name="Suzuki Y."/>
            <person name="Sugano S."/>
            <person name="Totoki Y."/>
            <person name="Toyoda A."/>
            <person name="Takeda T."/>
            <person name="Sakaki Y."/>
            <person name="Tanaka A."/>
            <person name="Yokoyama S."/>
        </authorList>
    </citation>
    <scope>NUCLEOTIDE SEQUENCE [LARGE SCALE MRNA] (ISOFORM 1)</scope>
    <source>
        <tissue>Liver</tissue>
    </source>
</reference>
<reference key="6">
    <citation type="journal article" date="2004" name="Nature">
        <title>The DNA sequence and comparative analysis of human chromosome 10.</title>
        <authorList>
            <person name="Deloukas P."/>
            <person name="Earthrowl M.E."/>
            <person name="Grafham D.V."/>
            <person name="Rubenfield M."/>
            <person name="French L."/>
            <person name="Steward C.A."/>
            <person name="Sims S.K."/>
            <person name="Jones M.C."/>
            <person name="Searle S."/>
            <person name="Scott C."/>
            <person name="Howe K."/>
            <person name="Hunt S.E."/>
            <person name="Andrews T.D."/>
            <person name="Gilbert J.G.R."/>
            <person name="Swarbreck D."/>
            <person name="Ashurst J.L."/>
            <person name="Taylor A."/>
            <person name="Battles J."/>
            <person name="Bird C.P."/>
            <person name="Ainscough R."/>
            <person name="Almeida J.P."/>
            <person name="Ashwell R.I.S."/>
            <person name="Ambrose K.D."/>
            <person name="Babbage A.K."/>
            <person name="Bagguley C.L."/>
            <person name="Bailey J."/>
            <person name="Banerjee R."/>
            <person name="Bates K."/>
            <person name="Beasley H."/>
            <person name="Bray-Allen S."/>
            <person name="Brown A.J."/>
            <person name="Brown J.Y."/>
            <person name="Burford D.C."/>
            <person name="Burrill W."/>
            <person name="Burton J."/>
            <person name="Cahill P."/>
            <person name="Camire D."/>
            <person name="Carter N.P."/>
            <person name="Chapman J.C."/>
            <person name="Clark S.Y."/>
            <person name="Clarke G."/>
            <person name="Clee C.M."/>
            <person name="Clegg S."/>
            <person name="Corby N."/>
            <person name="Coulson A."/>
            <person name="Dhami P."/>
            <person name="Dutta I."/>
            <person name="Dunn M."/>
            <person name="Faulkner L."/>
            <person name="Frankish A."/>
            <person name="Frankland J.A."/>
            <person name="Garner P."/>
            <person name="Garnett J."/>
            <person name="Gribble S."/>
            <person name="Griffiths C."/>
            <person name="Grocock R."/>
            <person name="Gustafson E."/>
            <person name="Hammond S."/>
            <person name="Harley J.L."/>
            <person name="Hart E."/>
            <person name="Heath P.D."/>
            <person name="Ho T.P."/>
            <person name="Hopkins B."/>
            <person name="Horne J."/>
            <person name="Howden P.J."/>
            <person name="Huckle E."/>
            <person name="Hynds C."/>
            <person name="Johnson C."/>
            <person name="Johnson D."/>
            <person name="Kana A."/>
            <person name="Kay M."/>
            <person name="Kimberley A.M."/>
            <person name="Kershaw J.K."/>
            <person name="Kokkinaki M."/>
            <person name="Laird G.K."/>
            <person name="Lawlor S."/>
            <person name="Lee H.M."/>
            <person name="Leongamornlert D.A."/>
            <person name="Laird G."/>
            <person name="Lloyd C."/>
            <person name="Lloyd D.M."/>
            <person name="Loveland J."/>
            <person name="Lovell J."/>
            <person name="McLaren S."/>
            <person name="McLay K.E."/>
            <person name="McMurray A."/>
            <person name="Mashreghi-Mohammadi M."/>
            <person name="Matthews L."/>
            <person name="Milne S."/>
            <person name="Nickerson T."/>
            <person name="Nguyen M."/>
            <person name="Overton-Larty E."/>
            <person name="Palmer S.A."/>
            <person name="Pearce A.V."/>
            <person name="Peck A.I."/>
            <person name="Pelan S."/>
            <person name="Phillimore B."/>
            <person name="Porter K."/>
            <person name="Rice C.M."/>
            <person name="Rogosin A."/>
            <person name="Ross M.T."/>
            <person name="Sarafidou T."/>
            <person name="Sehra H.K."/>
            <person name="Shownkeen R."/>
            <person name="Skuce C.D."/>
            <person name="Smith M."/>
            <person name="Standring L."/>
            <person name="Sycamore N."/>
            <person name="Tester J."/>
            <person name="Thorpe A."/>
            <person name="Torcasso W."/>
            <person name="Tracey A."/>
            <person name="Tromans A."/>
            <person name="Tsolas J."/>
            <person name="Wall M."/>
            <person name="Walsh J."/>
            <person name="Wang H."/>
            <person name="Weinstock K."/>
            <person name="West A.P."/>
            <person name="Willey D.L."/>
            <person name="Whitehead S.L."/>
            <person name="Wilming L."/>
            <person name="Wray P.W."/>
            <person name="Young L."/>
            <person name="Chen Y."/>
            <person name="Lovering R.C."/>
            <person name="Moschonas N.K."/>
            <person name="Siebert R."/>
            <person name="Fechtel K."/>
            <person name="Bentley D."/>
            <person name="Durbin R.M."/>
            <person name="Hubbard T."/>
            <person name="Doucette-Stamm L."/>
            <person name="Beck S."/>
            <person name="Smith D.R."/>
            <person name="Rogers J."/>
        </authorList>
    </citation>
    <scope>NUCLEOTIDE SEQUENCE [LARGE SCALE GENOMIC DNA]</scope>
</reference>
<reference key="7">
    <citation type="submission" date="2005-09" db="EMBL/GenBank/DDBJ databases">
        <authorList>
            <person name="Mural R.J."/>
            <person name="Istrail S."/>
            <person name="Sutton G.G."/>
            <person name="Florea L."/>
            <person name="Halpern A.L."/>
            <person name="Mobarry C.M."/>
            <person name="Lippert R."/>
            <person name="Walenz B."/>
            <person name="Shatkay H."/>
            <person name="Dew I."/>
            <person name="Miller J.R."/>
            <person name="Flanigan M.J."/>
            <person name="Edwards N.J."/>
            <person name="Bolanos R."/>
            <person name="Fasulo D."/>
            <person name="Halldorsson B.V."/>
            <person name="Hannenhalli S."/>
            <person name="Turner R."/>
            <person name="Yooseph S."/>
            <person name="Lu F."/>
            <person name="Nusskern D.R."/>
            <person name="Shue B.C."/>
            <person name="Zheng X.H."/>
            <person name="Zhong F."/>
            <person name="Delcher A.L."/>
            <person name="Huson D.H."/>
            <person name="Kravitz S.A."/>
            <person name="Mouchard L."/>
            <person name="Reinert K."/>
            <person name="Remington K.A."/>
            <person name="Clark A.G."/>
            <person name="Waterman M.S."/>
            <person name="Eichler E.E."/>
            <person name="Adams M.D."/>
            <person name="Hunkapiller M.W."/>
            <person name="Myers E.W."/>
            <person name="Venter J.C."/>
        </authorList>
    </citation>
    <scope>NUCLEOTIDE SEQUENCE [LARGE SCALE GENOMIC DNA]</scope>
</reference>
<reference key="8">
    <citation type="journal article" date="2004" name="Genome Res.">
        <title>The status, quality, and expansion of the NIH full-length cDNA project: the Mammalian Gene Collection (MGC).</title>
        <authorList>
            <consortium name="The MGC Project Team"/>
        </authorList>
    </citation>
    <scope>NUCLEOTIDE SEQUENCE [LARGE SCALE MRNA] (ISOFORM 1)</scope>
    <scope>VARIANTS PRO-16 AND LEU-29</scope>
    <source>
        <tissue>Placenta</tissue>
    </source>
</reference>
<reference key="9">
    <citation type="journal article" date="1981" name="J. Biol. Chem.">
        <title>Purification of the lysosomal acid lipase from human liver and its role in lysosomal lipid hydrolysis.</title>
        <authorList>
            <person name="Warner T.G."/>
            <person name="Dambach L.M."/>
            <person name="Shin J.H."/>
            <person name="O'Brien J.S."/>
        </authorList>
    </citation>
    <scope>FUNCTION</scope>
    <scope>CATALYTIC ACTIVITY</scope>
    <scope>BIOPHYSICOCHEMICAL PROPERTIES</scope>
</reference>
<reference key="10">
    <citation type="journal article" date="2004" name="J. Biochem.">
        <title>Lysosomal acid lipase as a preproprotein.</title>
        <authorList>
            <person name="Zschenker O."/>
            <person name="Oezden D."/>
            <person name="Ameis D."/>
        </authorList>
    </citation>
    <scope>FUNCTION</scope>
    <scope>CATALYTIC ACTIVITY</scope>
    <scope>PROTEOLYTIC PROCESSING</scope>
    <scope>MUTAGENESIS OF LYS-76 AND GLY-77</scope>
    <scope>BIOPHYSICOCHEMICAL PROPERTIES</scope>
</reference>
<reference key="11">
    <citation type="journal article" date="2009" name="J. Proteome Res.">
        <title>Glycoproteomics analysis of human liver tissue by combination of multiple enzyme digestion and hydrazide chemistry.</title>
        <authorList>
            <person name="Chen R."/>
            <person name="Jiang X."/>
            <person name="Sun D."/>
            <person name="Han G."/>
            <person name="Wang F."/>
            <person name="Ye M."/>
            <person name="Wang L."/>
            <person name="Zou H."/>
        </authorList>
    </citation>
    <scope>GLYCOSYLATION [LARGE SCALE ANALYSIS] AT ASN-161 AND ASN-321</scope>
    <source>
        <tissue>Liver</tissue>
    </source>
</reference>
<reference key="12">
    <citation type="journal article" date="2011" name="BMC Syst. Biol.">
        <title>Initial characterization of the human central proteome.</title>
        <authorList>
            <person name="Burkard T.R."/>
            <person name="Planyavsky M."/>
            <person name="Kaupe I."/>
            <person name="Breitwieser F.P."/>
            <person name="Buerckstuemmer T."/>
            <person name="Bennett K.L."/>
            <person name="Superti-Furga G."/>
            <person name="Colinge J."/>
        </authorList>
    </citation>
    <scope>IDENTIFICATION BY MASS SPECTROMETRY [LARGE SCALE ANALYSIS]</scope>
</reference>
<reference key="13">
    <citation type="journal article" date="2015" name="Proteomics">
        <title>N-terminome analysis of the human mitochondrial proteome.</title>
        <authorList>
            <person name="Vaca Jacome A.S."/>
            <person name="Rabilloud T."/>
            <person name="Schaeffer-Reiss C."/>
            <person name="Rompais M."/>
            <person name="Ayoub D."/>
            <person name="Lane L."/>
            <person name="Bairoch A."/>
            <person name="Van Dorsselaer A."/>
            <person name="Carapito C."/>
        </authorList>
    </citation>
    <scope>IDENTIFICATION BY MASS SPECTROMETRY [LARGE SCALE ANALYSIS]</scope>
</reference>
<reference key="14">
    <citation type="journal article" date="1994" name="Proc. Natl. Acad. Sci. U.S.A.">
        <title>Mutations at the lysosomal acid cholesteryl ester hydrolase gene locus in Wolman disease.</title>
        <authorList>
            <person name="Anderson R.A."/>
            <person name="Byrum R.S."/>
            <person name="Coates P.M."/>
            <person name="Sando G.N."/>
        </authorList>
    </citation>
    <scope>VARIANT WOLD PRO-200</scope>
</reference>
<reference key="15">
    <citation type="journal article" date="1995" name="J. Inherit. Metab. Dis.">
        <title>Occurrence of a mutation associated with Wolman disease in a family with cholesteryl ester storage disease.</title>
        <authorList>
            <person name="Maslen C.L."/>
            <person name="Babcock D."/>
            <person name="Illingworth D.R."/>
        </authorList>
    </citation>
    <scope>VARIANT CESD PRO-200</scope>
</reference>
<reference key="16">
    <citation type="journal article" date="1996" name="Hum. Mutat.">
        <title>A new mutation (LIPA Tyr22X) of lysosomal acid lipase gene in a Japanese patient with Wolman disease.</title>
        <authorList>
            <person name="Fujiyama J."/>
            <person name="Sakuraba H."/>
            <person name="Kuriyama M."/>
            <person name="Fujita T."/>
            <person name="Nagata K."/>
            <person name="Nakagawa H."/>
            <person name="Osame M."/>
        </authorList>
    </citation>
    <scope>VARIANT WOLD 43-TYR--GLN-399 DEL</scope>
</reference>
<reference key="17">
    <citation type="journal article" date="1998" name="Hum. Mutat.">
        <title>Different missense mutations in histidine-108 of lysosomal acid lipase cause cholesteryl ester storage disease in unrelated compound heterozygous and hemizygous individuals.</title>
        <authorList>
            <person name="Ries S."/>
            <person name="Buechler C."/>
            <person name="Schindler G."/>
            <person name="Aslanidis C."/>
            <person name="Ameis D."/>
            <person name="Gasche C."/>
            <person name="Jung N."/>
            <person name="Schambach A."/>
            <person name="Fehringer P."/>
            <person name="Vanier M.T."/>
            <person name="Belli D.C."/>
            <person name="Greten H."/>
            <person name="Schmitz G."/>
        </authorList>
    </citation>
    <scope>VARIANTS CESD ARG-129 AND PRO-129</scope>
    <scope>CHARACTERIZATION OF VARIANTS CESD ARG-129 AND PRO-129</scope>
    <scope>FUNCTION</scope>
    <scope>CATALYTIC ACTIVITY</scope>
</reference>
<reference key="18">
    <citation type="journal article" date="2011" name="Mol. Genet. Metab.">
        <title>Intragenic deletion as a novel type of mutation in Wolman disease.</title>
        <authorList>
            <person name="Lee T.M."/>
            <person name="Welsh M."/>
            <person name="Benhamed S."/>
            <person name="Chung W.K."/>
        </authorList>
    </citation>
    <scope>INVOLVEMENT IN WOLD</scope>
</reference>
<name>LICH_HUMAN</name>
<accession>P38571</accession>
<accession>B2RBH5</accession>
<accession>D3DR29</accession>
<accession>Q16529</accession>
<accession>Q53H21</accession>
<accession>Q5T074</accession>
<accession>Q5T771</accession>
<accession>Q96EJ0</accession>
<proteinExistence type="evidence at protein level"/>
<keyword id="KW-0002">3D-structure</keyword>
<keyword id="KW-0025">Alternative splicing</keyword>
<keyword id="KW-0903">Direct protein sequencing</keyword>
<keyword id="KW-0225">Disease variant</keyword>
<keyword id="KW-0325">Glycoprotein</keyword>
<keyword id="KW-0378">Hydrolase</keyword>
<keyword id="KW-0442">Lipid degradation</keyword>
<keyword id="KW-0443">Lipid metabolism</keyword>
<keyword id="KW-0458">Lysosome</keyword>
<keyword id="KW-1267">Proteomics identification</keyword>
<keyword id="KW-1185">Reference proteome</keyword>
<keyword id="KW-0732">Signal</keyword>
<gene>
    <name type="primary">LIPA</name>
</gene>
<evidence type="ECO:0000250" key="1">
    <source>
        <dbReference type="UniProtKB" id="Q64194"/>
    </source>
</evidence>
<evidence type="ECO:0000255" key="2"/>
<evidence type="ECO:0000255" key="3">
    <source>
        <dbReference type="PROSITE-ProRule" id="PRU10037"/>
    </source>
</evidence>
<evidence type="ECO:0000269" key="4">
    <source>
    </source>
</evidence>
<evidence type="ECO:0000269" key="5">
    <source>
    </source>
</evidence>
<evidence type="ECO:0000269" key="6">
    <source>
    </source>
</evidence>
<evidence type="ECO:0000269" key="7">
    <source>
    </source>
</evidence>
<evidence type="ECO:0000269" key="8">
    <source>
    </source>
</evidence>
<evidence type="ECO:0000269" key="9">
    <source>
    </source>
</evidence>
<evidence type="ECO:0000269" key="10">
    <source>
    </source>
</evidence>
<evidence type="ECO:0000269" key="11">
    <source>
    </source>
</evidence>
<evidence type="ECO:0000269" key="12">
    <source>
    </source>
</evidence>
<evidence type="ECO:0000269" key="13">
    <source>
    </source>
</evidence>
<evidence type="ECO:0000269" key="14">
    <source>
    </source>
</evidence>
<evidence type="ECO:0000269" key="15">
    <source>
    </source>
</evidence>
<evidence type="ECO:0000269" key="16">
    <source>
    </source>
</evidence>
<evidence type="ECO:0000305" key="17"/>
<evidence type="ECO:0000305" key="18">
    <source>
    </source>
</evidence>
<evidence type="ECO:0000305" key="19">
    <source>
    </source>
</evidence>
<evidence type="ECO:0000305" key="20">
    <source>
    </source>
</evidence>
<evidence type="ECO:0000305" key="21">
    <source>
    </source>
</evidence>
<evidence type="ECO:0007829" key="22">
    <source>
        <dbReference type="PDB" id="6V7N"/>
    </source>
</evidence>